<accession>Q17XG2</accession>
<reference key="1">
    <citation type="journal article" date="2006" name="PLoS Genet.">
        <title>Who ate whom? Adaptive Helicobacter genomic changes that accompanied a host jump from early humans to large felines.</title>
        <authorList>
            <person name="Eppinger M."/>
            <person name="Baar C."/>
            <person name="Linz B."/>
            <person name="Raddatz G."/>
            <person name="Lanz C."/>
            <person name="Keller H."/>
            <person name="Morelli G."/>
            <person name="Gressmann H."/>
            <person name="Achtman M."/>
            <person name="Schuster S.C."/>
        </authorList>
    </citation>
    <scope>NUCLEOTIDE SEQUENCE [LARGE SCALE GENOMIC DNA]</scope>
    <source>
        <strain>Sheeba</strain>
    </source>
</reference>
<protein>
    <recommendedName>
        <fullName evidence="1">Large ribosomal subunit protein bL9</fullName>
    </recommendedName>
    <alternativeName>
        <fullName evidence="2">50S ribosomal protein L9</fullName>
    </alternativeName>
</protein>
<organism>
    <name type="scientific">Helicobacter acinonychis (strain Sheeba)</name>
    <dbReference type="NCBI Taxonomy" id="382638"/>
    <lineage>
        <taxon>Bacteria</taxon>
        <taxon>Pseudomonadati</taxon>
        <taxon>Campylobacterota</taxon>
        <taxon>Epsilonproteobacteria</taxon>
        <taxon>Campylobacterales</taxon>
        <taxon>Helicobacteraceae</taxon>
        <taxon>Helicobacter</taxon>
    </lineage>
</organism>
<name>RL9_HELAH</name>
<proteinExistence type="inferred from homology"/>
<comment type="function">
    <text evidence="1">Binds to the 23S rRNA.</text>
</comment>
<comment type="similarity">
    <text evidence="1">Belongs to the bacterial ribosomal protein bL9 family.</text>
</comment>
<keyword id="KW-0687">Ribonucleoprotein</keyword>
<keyword id="KW-0689">Ribosomal protein</keyword>
<keyword id="KW-0694">RNA-binding</keyword>
<keyword id="KW-0699">rRNA-binding</keyword>
<gene>
    <name evidence="1" type="primary">rplI</name>
    <name type="ordered locus">Hac_0882</name>
</gene>
<sequence>MKVLLLEDVKNLGKAGEVCEVKDGYGNNFLIANKKAKLATNEVINKYKAEVKKKAETEALEKAQKLQMAETLQTVTLTIHKKVGANGSLFGAITKEEITERLKEHHANLNLDKKDIELKHPIKSTGIYEIEVKLGSGIVGVFKIDVVAE</sequence>
<evidence type="ECO:0000255" key="1">
    <source>
        <dbReference type="HAMAP-Rule" id="MF_00503"/>
    </source>
</evidence>
<evidence type="ECO:0000305" key="2"/>
<feature type="chain" id="PRO_1000014790" description="Large ribosomal subunit protein bL9">
    <location>
        <begin position="1"/>
        <end position="149"/>
    </location>
</feature>
<dbReference type="EMBL" id="AM260522">
    <property type="protein sequence ID" value="CAJ99664.1"/>
    <property type="molecule type" value="Genomic_DNA"/>
</dbReference>
<dbReference type="RefSeq" id="WP_011577776.1">
    <property type="nucleotide sequence ID" value="NC_008229.1"/>
</dbReference>
<dbReference type="SMR" id="Q17XG2"/>
<dbReference type="STRING" id="382638.Hac_0882"/>
<dbReference type="GeneID" id="31758290"/>
<dbReference type="KEGG" id="hac:Hac_0882"/>
<dbReference type="eggNOG" id="COG0359">
    <property type="taxonomic scope" value="Bacteria"/>
</dbReference>
<dbReference type="HOGENOM" id="CLU_078938_3_0_7"/>
<dbReference type="OrthoDB" id="9788336at2"/>
<dbReference type="BioCyc" id="HACI382638:HAC_RS03795-MONOMER"/>
<dbReference type="Proteomes" id="UP000000775">
    <property type="component" value="Chromosome"/>
</dbReference>
<dbReference type="GO" id="GO:1990904">
    <property type="term" value="C:ribonucleoprotein complex"/>
    <property type="evidence" value="ECO:0007669"/>
    <property type="project" value="UniProtKB-KW"/>
</dbReference>
<dbReference type="GO" id="GO:0005840">
    <property type="term" value="C:ribosome"/>
    <property type="evidence" value="ECO:0007669"/>
    <property type="project" value="UniProtKB-KW"/>
</dbReference>
<dbReference type="GO" id="GO:0019843">
    <property type="term" value="F:rRNA binding"/>
    <property type="evidence" value="ECO:0007669"/>
    <property type="project" value="UniProtKB-UniRule"/>
</dbReference>
<dbReference type="GO" id="GO:0003735">
    <property type="term" value="F:structural constituent of ribosome"/>
    <property type="evidence" value="ECO:0007669"/>
    <property type="project" value="InterPro"/>
</dbReference>
<dbReference type="GO" id="GO:0006412">
    <property type="term" value="P:translation"/>
    <property type="evidence" value="ECO:0007669"/>
    <property type="project" value="UniProtKB-UniRule"/>
</dbReference>
<dbReference type="FunFam" id="3.10.430.100:FF:000003">
    <property type="entry name" value="50S ribosomal protein L9"/>
    <property type="match status" value="1"/>
</dbReference>
<dbReference type="FunFam" id="3.40.5.10:FF:000002">
    <property type="entry name" value="50S ribosomal protein L9"/>
    <property type="match status" value="1"/>
</dbReference>
<dbReference type="Gene3D" id="3.10.430.100">
    <property type="entry name" value="Ribosomal protein L9, C-terminal domain"/>
    <property type="match status" value="1"/>
</dbReference>
<dbReference type="Gene3D" id="3.40.5.10">
    <property type="entry name" value="Ribosomal protein L9, N-terminal domain"/>
    <property type="match status" value="1"/>
</dbReference>
<dbReference type="HAMAP" id="MF_00503">
    <property type="entry name" value="Ribosomal_bL9"/>
    <property type="match status" value="1"/>
</dbReference>
<dbReference type="InterPro" id="IPR000244">
    <property type="entry name" value="Ribosomal_bL9"/>
</dbReference>
<dbReference type="InterPro" id="IPR009027">
    <property type="entry name" value="Ribosomal_bL9/RNase_H1_N"/>
</dbReference>
<dbReference type="InterPro" id="IPR020594">
    <property type="entry name" value="Ribosomal_bL9_bac/chp"/>
</dbReference>
<dbReference type="InterPro" id="IPR020069">
    <property type="entry name" value="Ribosomal_bL9_C"/>
</dbReference>
<dbReference type="InterPro" id="IPR036791">
    <property type="entry name" value="Ribosomal_bL9_C_sf"/>
</dbReference>
<dbReference type="InterPro" id="IPR020070">
    <property type="entry name" value="Ribosomal_bL9_N"/>
</dbReference>
<dbReference type="InterPro" id="IPR036935">
    <property type="entry name" value="Ribosomal_bL9_N_sf"/>
</dbReference>
<dbReference type="NCBIfam" id="TIGR00158">
    <property type="entry name" value="L9"/>
    <property type="match status" value="1"/>
</dbReference>
<dbReference type="PANTHER" id="PTHR21368">
    <property type="entry name" value="50S RIBOSOMAL PROTEIN L9"/>
    <property type="match status" value="1"/>
</dbReference>
<dbReference type="Pfam" id="PF03948">
    <property type="entry name" value="Ribosomal_L9_C"/>
    <property type="match status" value="1"/>
</dbReference>
<dbReference type="Pfam" id="PF01281">
    <property type="entry name" value="Ribosomal_L9_N"/>
    <property type="match status" value="1"/>
</dbReference>
<dbReference type="SUPFAM" id="SSF55658">
    <property type="entry name" value="L9 N-domain-like"/>
    <property type="match status" value="1"/>
</dbReference>
<dbReference type="SUPFAM" id="SSF55653">
    <property type="entry name" value="Ribosomal protein L9 C-domain"/>
    <property type="match status" value="1"/>
</dbReference>
<dbReference type="PROSITE" id="PS00651">
    <property type="entry name" value="RIBOSOMAL_L9"/>
    <property type="match status" value="1"/>
</dbReference>